<name>VITH3_ARATH</name>
<proteinExistence type="evidence at transcript level"/>
<comment type="function">
    <text evidence="3">Probable vacuolar iron transporter that may be involved in the regulation of iron distribution throughout the plant.</text>
</comment>
<comment type="catalytic activity">
    <reaction evidence="1">
        <text>Fe(2+)(in) = Fe(2+)(out)</text>
        <dbReference type="Rhea" id="RHEA:28486"/>
        <dbReference type="ChEBI" id="CHEBI:29033"/>
    </reaction>
    <physiologicalReaction direction="left-to-right" evidence="5">
        <dbReference type="Rhea" id="RHEA:28487"/>
    </physiologicalReaction>
</comment>
<comment type="subcellular location">
    <subcellularLocation>
        <location evidence="1">Vacuole membrane</location>
        <topology evidence="2">Multi-pass membrane protein</topology>
    </subcellularLocation>
</comment>
<comment type="induction">
    <text evidence="3">Induced by iron supply.</text>
</comment>
<comment type="disruption phenotype">
    <text evidence="3">No visible phenotype under normal growth condition, but decreased accumulation of iron in the root and increased accumulation in the shoot when grown under high iron concentration.</text>
</comment>
<comment type="similarity">
    <text evidence="5">Belongs to the CCC1 family.</text>
</comment>
<evidence type="ECO:0000250" key="1">
    <source>
        <dbReference type="UniProtKB" id="Q9LPU9"/>
    </source>
</evidence>
<evidence type="ECO:0000255" key="2"/>
<evidence type="ECO:0000269" key="3">
    <source>
    </source>
</evidence>
<evidence type="ECO:0000303" key="4">
    <source>
    </source>
</evidence>
<evidence type="ECO:0000305" key="5"/>
<evidence type="ECO:0000312" key="6">
    <source>
        <dbReference type="Araport" id="AT3G43630"/>
    </source>
</evidence>
<evidence type="ECO:0000312" key="7">
    <source>
        <dbReference type="EMBL" id="CAB83064.1"/>
    </source>
</evidence>
<keyword id="KW-0406">Ion transport</keyword>
<keyword id="KW-0408">Iron</keyword>
<keyword id="KW-0410">Iron transport</keyword>
<keyword id="KW-0472">Membrane</keyword>
<keyword id="KW-1185">Reference proteome</keyword>
<keyword id="KW-0812">Transmembrane</keyword>
<keyword id="KW-1133">Transmembrane helix</keyword>
<keyword id="KW-0813">Transport</keyword>
<keyword id="KW-0926">Vacuole</keyword>
<protein>
    <recommendedName>
        <fullName evidence="5">Vacuolar iron transporter homolog 3</fullName>
    </recommendedName>
    <alternativeName>
        <fullName evidence="4">Protein NODULIN-LIKE 3</fullName>
    </alternativeName>
</protein>
<sequence length="200" mass="21192">MESHNTLNLDMEKDQEKAFDYSKRAQWLRAAVLGANDGLVSTASLMMGVGAVKQNVKIMILTGFAGLVAGACSMAIGEFVSVYSQYDIEVAQMKRETGGEIEKEKLPSPTQAAAASALAFSLGAMVPLLAAAFVKEYKVRIGAIVAAVTLALVMFGWLGAVLGKAPVVKSSLRVLVGGWLAMAITYGFTKLIGSHSHMYV</sequence>
<reference key="1">
    <citation type="journal article" date="2000" name="Nature">
        <title>Sequence and analysis of chromosome 3 of the plant Arabidopsis thaliana.</title>
        <authorList>
            <person name="Salanoubat M."/>
            <person name="Lemcke K."/>
            <person name="Rieger M."/>
            <person name="Ansorge W."/>
            <person name="Unseld M."/>
            <person name="Fartmann B."/>
            <person name="Valle G."/>
            <person name="Bloecker H."/>
            <person name="Perez-Alonso M."/>
            <person name="Obermaier B."/>
            <person name="Delseny M."/>
            <person name="Boutry M."/>
            <person name="Grivell L.A."/>
            <person name="Mache R."/>
            <person name="Puigdomenech P."/>
            <person name="De Simone V."/>
            <person name="Choisne N."/>
            <person name="Artiguenave F."/>
            <person name="Robert C."/>
            <person name="Brottier P."/>
            <person name="Wincker P."/>
            <person name="Cattolico L."/>
            <person name="Weissenbach J."/>
            <person name="Saurin W."/>
            <person name="Quetier F."/>
            <person name="Schaefer M."/>
            <person name="Mueller-Auer S."/>
            <person name="Gabel C."/>
            <person name="Fuchs M."/>
            <person name="Benes V."/>
            <person name="Wurmbach E."/>
            <person name="Drzonek H."/>
            <person name="Erfle H."/>
            <person name="Jordan N."/>
            <person name="Bangert S."/>
            <person name="Wiedelmann R."/>
            <person name="Kranz H."/>
            <person name="Voss H."/>
            <person name="Holland R."/>
            <person name="Brandt P."/>
            <person name="Nyakatura G."/>
            <person name="Vezzi A."/>
            <person name="D'Angelo M."/>
            <person name="Pallavicini A."/>
            <person name="Toppo S."/>
            <person name="Simionati B."/>
            <person name="Conrad A."/>
            <person name="Hornischer K."/>
            <person name="Kauer G."/>
            <person name="Loehnert T.-H."/>
            <person name="Nordsiek G."/>
            <person name="Reichelt J."/>
            <person name="Scharfe M."/>
            <person name="Schoen O."/>
            <person name="Bargues M."/>
            <person name="Terol J."/>
            <person name="Climent J."/>
            <person name="Navarro P."/>
            <person name="Collado C."/>
            <person name="Perez-Perez A."/>
            <person name="Ottenwaelder B."/>
            <person name="Duchemin D."/>
            <person name="Cooke R."/>
            <person name="Laudie M."/>
            <person name="Berger-Llauro C."/>
            <person name="Purnelle B."/>
            <person name="Masuy D."/>
            <person name="de Haan M."/>
            <person name="Maarse A.C."/>
            <person name="Alcaraz J.-P."/>
            <person name="Cottet A."/>
            <person name="Casacuberta E."/>
            <person name="Monfort A."/>
            <person name="Argiriou A."/>
            <person name="Flores M."/>
            <person name="Liguori R."/>
            <person name="Vitale D."/>
            <person name="Mannhaupt G."/>
            <person name="Haase D."/>
            <person name="Schoof H."/>
            <person name="Rudd S."/>
            <person name="Zaccaria P."/>
            <person name="Mewes H.-W."/>
            <person name="Mayer K.F.X."/>
            <person name="Kaul S."/>
            <person name="Town C.D."/>
            <person name="Koo H.L."/>
            <person name="Tallon L.J."/>
            <person name="Jenkins J."/>
            <person name="Rooney T."/>
            <person name="Rizzo M."/>
            <person name="Walts A."/>
            <person name="Utterback T."/>
            <person name="Fujii C.Y."/>
            <person name="Shea T.P."/>
            <person name="Creasy T.H."/>
            <person name="Haas B."/>
            <person name="Maiti R."/>
            <person name="Wu D."/>
            <person name="Peterson J."/>
            <person name="Van Aken S."/>
            <person name="Pai G."/>
            <person name="Militscher J."/>
            <person name="Sellers P."/>
            <person name="Gill J.E."/>
            <person name="Feldblyum T.V."/>
            <person name="Preuss D."/>
            <person name="Lin X."/>
            <person name="Nierman W.C."/>
            <person name="Salzberg S.L."/>
            <person name="White O."/>
            <person name="Venter J.C."/>
            <person name="Fraser C.M."/>
            <person name="Kaneko T."/>
            <person name="Nakamura Y."/>
            <person name="Sato S."/>
            <person name="Kato T."/>
            <person name="Asamizu E."/>
            <person name="Sasamoto S."/>
            <person name="Kimura T."/>
            <person name="Idesawa K."/>
            <person name="Kawashima K."/>
            <person name="Kishida Y."/>
            <person name="Kiyokawa C."/>
            <person name="Kohara M."/>
            <person name="Matsumoto M."/>
            <person name="Matsuno A."/>
            <person name="Muraki A."/>
            <person name="Nakayama S."/>
            <person name="Nakazaki N."/>
            <person name="Shinpo S."/>
            <person name="Takeuchi C."/>
            <person name="Wada T."/>
            <person name="Watanabe A."/>
            <person name="Yamada M."/>
            <person name="Yasuda M."/>
            <person name="Tabata S."/>
        </authorList>
    </citation>
    <scope>NUCLEOTIDE SEQUENCE [LARGE SCALE GENOMIC DNA]</scope>
    <source>
        <strain>cv. Columbia</strain>
    </source>
</reference>
<reference key="2">
    <citation type="journal article" date="2017" name="Plant J.">
        <title>Araport11: a complete reannotation of the Arabidopsis thaliana reference genome.</title>
        <authorList>
            <person name="Cheng C.Y."/>
            <person name="Krishnakumar V."/>
            <person name="Chan A.P."/>
            <person name="Thibaud-Nissen F."/>
            <person name="Schobel S."/>
            <person name="Town C.D."/>
        </authorList>
    </citation>
    <scope>GENOME REANNOTATION</scope>
    <source>
        <strain>cv. Columbia</strain>
    </source>
</reference>
<reference key="3">
    <citation type="journal article" date="2011" name="Plant Physiol. Biochem.">
        <title>Members of a small family of nodulin-like genes are regulated under iron deficiency in roots of Arabidopsis thaliana.</title>
        <authorList>
            <person name="Gollhofer J."/>
            <person name="Schlaewicke C."/>
            <person name="Jungnick N."/>
            <person name="Schmidt W."/>
            <person name="Buckhout T.J."/>
        </authorList>
    </citation>
    <scope>FUNCTION</scope>
    <scope>INDUCTION</scope>
    <scope>DISRUPTION PHENOTYPE</scope>
</reference>
<gene>
    <name evidence="6" type="ordered locus">At3g43630</name>
    <name evidence="7" type="ORF">F22J12.3</name>
</gene>
<accession>Q9M2C3</accession>
<organism>
    <name type="scientific">Arabidopsis thaliana</name>
    <name type="common">Mouse-ear cress</name>
    <dbReference type="NCBI Taxonomy" id="3702"/>
    <lineage>
        <taxon>Eukaryota</taxon>
        <taxon>Viridiplantae</taxon>
        <taxon>Streptophyta</taxon>
        <taxon>Embryophyta</taxon>
        <taxon>Tracheophyta</taxon>
        <taxon>Spermatophyta</taxon>
        <taxon>Magnoliopsida</taxon>
        <taxon>eudicotyledons</taxon>
        <taxon>Gunneridae</taxon>
        <taxon>Pentapetalae</taxon>
        <taxon>rosids</taxon>
        <taxon>malvids</taxon>
        <taxon>Brassicales</taxon>
        <taxon>Brassicaceae</taxon>
        <taxon>Camelineae</taxon>
        <taxon>Arabidopsis</taxon>
    </lineage>
</organism>
<feature type="chain" id="PRO_0000411010" description="Vacuolar iron transporter homolog 3">
    <location>
        <begin position="1"/>
        <end position="200"/>
    </location>
</feature>
<feature type="topological domain" description="Cytoplasmic" evidence="2">
    <location>
        <begin position="1"/>
        <end position="31"/>
    </location>
</feature>
<feature type="transmembrane region" description="Helical" evidence="2">
    <location>
        <begin position="32"/>
        <end position="52"/>
    </location>
</feature>
<feature type="topological domain" description="Vacuolar" evidence="2">
    <location>
        <begin position="53"/>
        <end position="59"/>
    </location>
</feature>
<feature type="transmembrane region" description="Helical" evidence="2">
    <location>
        <begin position="60"/>
        <end position="80"/>
    </location>
</feature>
<feature type="topological domain" description="Cytoplasmic" evidence="2">
    <location>
        <begin position="81"/>
        <end position="113"/>
    </location>
</feature>
<feature type="transmembrane region" description="Helical" evidence="2">
    <location>
        <begin position="114"/>
        <end position="134"/>
    </location>
</feature>
<feature type="topological domain" description="Vacuolar" evidence="2">
    <location>
        <begin position="135"/>
        <end position="140"/>
    </location>
</feature>
<feature type="transmembrane region" description="Helical" evidence="2">
    <location>
        <begin position="141"/>
        <end position="161"/>
    </location>
</feature>
<feature type="topological domain" description="Cytoplasmic" evidence="2">
    <location>
        <begin position="162"/>
        <end position="173"/>
    </location>
</feature>
<feature type="transmembrane region" description="Helical" evidence="2">
    <location>
        <begin position="174"/>
        <end position="194"/>
    </location>
</feature>
<feature type="topological domain" description="Vacuolar" evidence="2">
    <location>
        <begin position="195"/>
        <end position="200"/>
    </location>
</feature>
<dbReference type="EMBL" id="AL138638">
    <property type="protein sequence ID" value="CAB83064.1"/>
    <property type="molecule type" value="Genomic_DNA"/>
</dbReference>
<dbReference type="EMBL" id="CP002686">
    <property type="protein sequence ID" value="AEE77815.1"/>
    <property type="molecule type" value="Genomic_DNA"/>
</dbReference>
<dbReference type="PIR" id="T47399">
    <property type="entry name" value="T47399"/>
</dbReference>
<dbReference type="RefSeq" id="NP_189949.1">
    <property type="nucleotide sequence ID" value="NM_114231.1"/>
</dbReference>
<dbReference type="SMR" id="Q9M2C3"/>
<dbReference type="STRING" id="3702.Q9M2C3"/>
<dbReference type="TCDB" id="2.A.89.3.6">
    <property type="family name" value="the vacuolar iron transporter (vit) family"/>
</dbReference>
<dbReference type="GlyGen" id="Q9M2C3">
    <property type="glycosylation" value="1 site"/>
</dbReference>
<dbReference type="PaxDb" id="3702-AT3G43630.1"/>
<dbReference type="EnsemblPlants" id="AT3G43630.1">
    <property type="protein sequence ID" value="AT3G43630.1"/>
    <property type="gene ID" value="AT3G43630"/>
</dbReference>
<dbReference type="GeneID" id="823461"/>
<dbReference type="Gramene" id="AT3G43630.1">
    <property type="protein sequence ID" value="AT3G43630.1"/>
    <property type="gene ID" value="AT3G43630"/>
</dbReference>
<dbReference type="KEGG" id="ath:AT3G43630"/>
<dbReference type="Araport" id="AT3G43630"/>
<dbReference type="TAIR" id="AT3G43630"/>
<dbReference type="eggNOG" id="KOG4473">
    <property type="taxonomic scope" value="Eukaryota"/>
</dbReference>
<dbReference type="HOGENOM" id="CLU_038957_5_0_1"/>
<dbReference type="InParanoid" id="Q9M2C3"/>
<dbReference type="OMA" id="YTKRSQW"/>
<dbReference type="OrthoDB" id="73465at2759"/>
<dbReference type="PhylomeDB" id="Q9M2C3"/>
<dbReference type="PRO" id="PR:Q9M2C3"/>
<dbReference type="Proteomes" id="UP000006548">
    <property type="component" value="Chromosome 3"/>
</dbReference>
<dbReference type="ExpressionAtlas" id="Q9M2C3">
    <property type="expression patterns" value="baseline and differential"/>
</dbReference>
<dbReference type="GO" id="GO:0005774">
    <property type="term" value="C:vacuolar membrane"/>
    <property type="evidence" value="ECO:0007669"/>
    <property type="project" value="UniProtKB-SubCell"/>
</dbReference>
<dbReference type="GO" id="GO:0005384">
    <property type="term" value="F:manganese ion transmembrane transporter activity"/>
    <property type="evidence" value="ECO:0007669"/>
    <property type="project" value="InterPro"/>
</dbReference>
<dbReference type="GO" id="GO:0030026">
    <property type="term" value="P:intracellular manganese ion homeostasis"/>
    <property type="evidence" value="ECO:0007669"/>
    <property type="project" value="InterPro"/>
</dbReference>
<dbReference type="GO" id="GO:0006826">
    <property type="term" value="P:iron ion transport"/>
    <property type="evidence" value="ECO:0007669"/>
    <property type="project" value="UniProtKB-KW"/>
</dbReference>
<dbReference type="GO" id="GO:0010039">
    <property type="term" value="P:response to iron ion"/>
    <property type="evidence" value="ECO:0000270"/>
    <property type="project" value="TAIR"/>
</dbReference>
<dbReference type="InterPro" id="IPR008217">
    <property type="entry name" value="Ccc1_fam"/>
</dbReference>
<dbReference type="PANTHER" id="PTHR31851">
    <property type="entry name" value="FE(2+)/MN(2+) TRANSPORTER PCL1"/>
    <property type="match status" value="1"/>
</dbReference>
<dbReference type="Pfam" id="PF01988">
    <property type="entry name" value="VIT1"/>
    <property type="match status" value="2"/>
</dbReference>